<protein>
    <recommendedName>
        <fullName>Beta-etherase</fullName>
    </recommendedName>
    <alternativeName>
        <fullName>Beta-aryl ether cleaving enzyme</fullName>
    </alternativeName>
</protein>
<proteinExistence type="evidence at protein level"/>
<reference key="1">
    <citation type="journal article" date="1991" name="J. Bacteriol.">
        <title>Cloning and sequencing of the gene for a Pseudomonas paucimobilis enzyme that cleaves beta-aryl ether.</title>
        <authorList>
            <person name="Masai E."/>
            <person name="Katayama Y."/>
            <person name="Kawai S."/>
            <person name="Nishikawa S."/>
            <person name="Yamasaki M."/>
            <person name="Morohoshi N."/>
        </authorList>
    </citation>
    <scope>NUCLEOTIDE SEQUENCE [GENOMIC DNA]</scope>
    <scope>PROTEIN SEQUENCE OF 2-11</scope>
    <source>
        <strain>NBRC 103272 / SYK-6</strain>
    </source>
</reference>
<reference key="2">
    <citation type="journal article" date="1993" name="FEBS Lett.">
        <title>A bacterial enzyme degrading the model lignin compound beta-etherase is a member of the glutathione-S-transferase superfamily.</title>
        <authorList>
            <person name="Masai E."/>
            <person name="Katayama Y."/>
            <person name="Kubota S."/>
            <person name="Kawai S."/>
            <person name="Yamasaki M."/>
            <person name="Morohoshi N."/>
        </authorList>
    </citation>
    <scope>NUCLEOTIDE SEQUENCE [GENOMIC DNA]</scope>
    <source>
        <strain>NBRC 103272 / SYK-6</strain>
    </source>
</reference>
<keyword id="KW-0002">3D-structure</keyword>
<keyword id="KW-0997">Cell inner membrane</keyword>
<keyword id="KW-1003">Cell membrane</keyword>
<keyword id="KW-0903">Direct protein sequencing</keyword>
<keyword id="KW-0378">Hydrolase</keyword>
<keyword id="KW-0439">Lignin degradation</keyword>
<keyword id="KW-0472">Membrane</keyword>
<sequence length="281" mass="32070">MARNNTITLYDLQLESGCTISPYVWRTKYALKHKGFDIDIVPGGFTGILERTGGRSERVPVIVDDGEWVLDSWVIAEYLDEKYPDRPMLFEGPTQKNLMKFLDNWLWSTAVGPWFRCYILDYHDLSLPQDRDYVRWSREQWFLGGQRLEDVQAGREDRLPLVPPTLEPFRRILAETKWLGGDQPNFADYSALAVFLWTASVARTPPLTEDDPLRDWLDRGFDLFDGLGRHPGMNPLFGLKLREGDPEPFVRQTGPAGAGGQALNKGPQTTKMPPRVAEKAD</sequence>
<comment type="function">
    <text>Able to degrade various dimeric lignin compounds. Catalyzes the unique and reductive cleavage of arylglycerol-beta-aryl ether.</text>
</comment>
<comment type="subcellular location">
    <subcellularLocation>
        <location>Cell inner membrane</location>
        <topology>Peripheral membrane protein</topology>
    </subcellularLocation>
</comment>
<comment type="similarity">
    <text evidence="3">Belongs to the GST superfamily.</text>
</comment>
<feature type="initiator methionine" description="Removed" evidence="2">
    <location>
        <position position="1"/>
    </location>
</feature>
<feature type="chain" id="PRO_0000084420" description="Beta-etherase">
    <location>
        <begin position="2"/>
        <end position="281"/>
    </location>
</feature>
<feature type="domain" description="GST N-terminal">
    <location>
        <begin position="11"/>
        <end position="87"/>
    </location>
</feature>
<feature type="region of interest" description="Disordered" evidence="1">
    <location>
        <begin position="244"/>
        <end position="281"/>
    </location>
</feature>
<feature type="strand" evidence="4">
    <location>
        <begin position="6"/>
        <end position="10"/>
    </location>
</feature>
<feature type="helix" evidence="4">
    <location>
        <begin position="22"/>
        <end position="33"/>
    </location>
</feature>
<feature type="strand" evidence="4">
    <location>
        <begin position="37"/>
        <end position="41"/>
    </location>
</feature>
<feature type="helix" evidence="4">
    <location>
        <begin position="48"/>
        <end position="51"/>
    </location>
</feature>
<feature type="strand" evidence="4">
    <location>
        <begin position="57"/>
        <end position="59"/>
    </location>
</feature>
<feature type="strand" evidence="4">
    <location>
        <begin position="61"/>
        <end position="64"/>
    </location>
</feature>
<feature type="strand" evidence="4">
    <location>
        <begin position="67"/>
        <end position="71"/>
    </location>
</feature>
<feature type="helix" evidence="4">
    <location>
        <begin position="72"/>
        <end position="82"/>
    </location>
</feature>
<feature type="helix" evidence="4">
    <location>
        <begin position="93"/>
        <end position="109"/>
    </location>
</feature>
<feature type="helix" evidence="4">
    <location>
        <begin position="111"/>
        <end position="125"/>
    </location>
</feature>
<feature type="helix" evidence="4">
    <location>
        <begin position="128"/>
        <end position="130"/>
    </location>
</feature>
<feature type="helix" evidence="4">
    <location>
        <begin position="131"/>
        <end position="141"/>
    </location>
</feature>
<feature type="helix" evidence="4">
    <location>
        <begin position="148"/>
        <end position="152"/>
    </location>
</feature>
<feature type="helix" evidence="4">
    <location>
        <begin position="155"/>
        <end position="158"/>
    </location>
</feature>
<feature type="helix" evidence="4">
    <location>
        <begin position="159"/>
        <end position="161"/>
    </location>
</feature>
<feature type="helix" evidence="4">
    <location>
        <begin position="163"/>
        <end position="166"/>
    </location>
</feature>
<feature type="helix" evidence="4">
    <location>
        <begin position="167"/>
        <end position="173"/>
    </location>
</feature>
<feature type="strand" evidence="4">
    <location>
        <begin position="181"/>
        <end position="183"/>
    </location>
</feature>
<feature type="helix" evidence="4">
    <location>
        <begin position="186"/>
        <end position="201"/>
    </location>
</feature>
<feature type="helix" evidence="4">
    <location>
        <begin position="214"/>
        <end position="226"/>
    </location>
</feature>
<evidence type="ECO:0000256" key="1">
    <source>
        <dbReference type="SAM" id="MobiDB-lite"/>
    </source>
</evidence>
<evidence type="ECO:0000269" key="2">
    <source>
    </source>
</evidence>
<evidence type="ECO:0000305" key="3"/>
<evidence type="ECO:0007829" key="4">
    <source>
        <dbReference type="PDB" id="4YAM"/>
    </source>
</evidence>
<gene>
    <name type="primary">ligE</name>
</gene>
<accession>P27457</accession>
<name>LIGE_SPHSK</name>
<dbReference type="EMBL" id="M69107">
    <property type="protein sequence ID" value="AAA25878.1"/>
    <property type="molecule type" value="Genomic_DNA"/>
</dbReference>
<dbReference type="EMBL" id="D11473">
    <property type="protein sequence ID" value="BAA02032.1"/>
    <property type="molecule type" value="Genomic_DNA"/>
</dbReference>
<dbReference type="PIR" id="A43749">
    <property type="entry name" value="A43749"/>
</dbReference>
<dbReference type="RefSeq" id="WP_014075192.1">
    <property type="nucleotide sequence ID" value="NC_015976.1"/>
</dbReference>
<dbReference type="PDB" id="4YAM">
    <property type="method" value="X-ray"/>
    <property type="resolution" value="1.91 A"/>
    <property type="chains" value="A/B/C/D=1-281"/>
</dbReference>
<dbReference type="PDBsum" id="4YAM"/>
<dbReference type="SMR" id="P27457"/>
<dbReference type="STRING" id="627192.SLG_08660"/>
<dbReference type="OrthoDB" id="508035at2"/>
<dbReference type="BioCyc" id="MetaCyc:MONOMER-15130"/>
<dbReference type="GO" id="GO:0005886">
    <property type="term" value="C:plasma membrane"/>
    <property type="evidence" value="ECO:0007669"/>
    <property type="project" value="UniProtKB-SubCell"/>
</dbReference>
<dbReference type="GO" id="GO:0016787">
    <property type="term" value="F:hydrolase activity"/>
    <property type="evidence" value="ECO:0007669"/>
    <property type="project" value="UniProtKB-KW"/>
</dbReference>
<dbReference type="GO" id="GO:0046274">
    <property type="term" value="P:lignin catabolic process"/>
    <property type="evidence" value="ECO:0007669"/>
    <property type="project" value="UniProtKB-KW"/>
</dbReference>
<dbReference type="CDD" id="cd03202">
    <property type="entry name" value="GST_C_etherase_LigE"/>
    <property type="match status" value="1"/>
</dbReference>
<dbReference type="Gene3D" id="1.20.1050.10">
    <property type="match status" value="1"/>
</dbReference>
<dbReference type="Gene3D" id="3.40.30.10">
    <property type="entry name" value="Glutaredoxin"/>
    <property type="match status" value="1"/>
</dbReference>
<dbReference type="InterPro" id="IPR036282">
    <property type="entry name" value="Glutathione-S-Trfase_C_sf"/>
</dbReference>
<dbReference type="InterPro" id="IPR004045">
    <property type="entry name" value="Glutathione_S-Trfase_N"/>
</dbReference>
<dbReference type="InterPro" id="IPR054416">
    <property type="entry name" value="GST_UstS-like_C"/>
</dbReference>
<dbReference type="InterPro" id="IPR053605">
    <property type="entry name" value="Lignin-Degrading_GST-like"/>
</dbReference>
<dbReference type="InterPro" id="IPR036249">
    <property type="entry name" value="Thioredoxin-like_sf"/>
</dbReference>
<dbReference type="NCBIfam" id="NF042997">
    <property type="entry name" value="bet_ethrase"/>
    <property type="match status" value="1"/>
</dbReference>
<dbReference type="Pfam" id="PF22041">
    <property type="entry name" value="GST_C_7"/>
    <property type="match status" value="1"/>
</dbReference>
<dbReference type="Pfam" id="PF13417">
    <property type="entry name" value="GST_N_3"/>
    <property type="match status" value="1"/>
</dbReference>
<dbReference type="SUPFAM" id="SSF47616">
    <property type="entry name" value="GST C-terminal domain-like"/>
    <property type="match status" value="1"/>
</dbReference>
<dbReference type="SUPFAM" id="SSF52833">
    <property type="entry name" value="Thioredoxin-like"/>
    <property type="match status" value="1"/>
</dbReference>
<dbReference type="PROSITE" id="PS50404">
    <property type="entry name" value="GST_NTER"/>
    <property type="match status" value="1"/>
</dbReference>
<organism>
    <name type="scientific">Sphingobium sp. (strain NBRC 103272 / SYK-6)</name>
    <dbReference type="NCBI Taxonomy" id="627192"/>
    <lineage>
        <taxon>Bacteria</taxon>
        <taxon>Pseudomonadati</taxon>
        <taxon>Pseudomonadota</taxon>
        <taxon>Alphaproteobacteria</taxon>
        <taxon>Sphingomonadales</taxon>
        <taxon>Sphingomonadaceae</taxon>
        <taxon>Sphingobium</taxon>
    </lineage>
</organism>